<evidence type="ECO:0000255" key="1">
    <source>
        <dbReference type="HAMAP-Rule" id="MF_01365"/>
    </source>
</evidence>
<evidence type="ECO:0000256" key="2">
    <source>
        <dbReference type="SAM" id="MobiDB-lite"/>
    </source>
</evidence>
<evidence type="ECO:0000305" key="3"/>
<keyword id="KW-0687">Ribonucleoprotein</keyword>
<keyword id="KW-0689">Ribosomal protein</keyword>
<keyword id="KW-0694">RNA-binding</keyword>
<keyword id="KW-0699">rRNA-binding</keyword>
<protein>
    <recommendedName>
        <fullName evidence="1">Large ribosomal subunit protein uL6</fullName>
    </recommendedName>
    <alternativeName>
        <fullName evidence="3">50S ribosomal protein L6</fullName>
    </alternativeName>
</protein>
<reference key="1">
    <citation type="journal article" date="2004" name="Nucleic Acids Res.">
        <title>Whole genome comparisons of serotype 4b and 1/2a strains of the food-borne pathogen Listeria monocytogenes reveal new insights into the core genome components of this species.</title>
        <authorList>
            <person name="Nelson K.E."/>
            <person name="Fouts D.E."/>
            <person name="Mongodin E.F."/>
            <person name="Ravel J."/>
            <person name="DeBoy R.T."/>
            <person name="Kolonay J.F."/>
            <person name="Rasko D.A."/>
            <person name="Angiuoli S.V."/>
            <person name="Gill S.R."/>
            <person name="Paulsen I.T."/>
            <person name="Peterson J.D."/>
            <person name="White O."/>
            <person name="Nelson W.C."/>
            <person name="Nierman W.C."/>
            <person name="Beanan M.J."/>
            <person name="Brinkac L.M."/>
            <person name="Daugherty S.C."/>
            <person name="Dodson R.J."/>
            <person name="Durkin A.S."/>
            <person name="Madupu R."/>
            <person name="Haft D.H."/>
            <person name="Selengut J."/>
            <person name="Van Aken S.E."/>
            <person name="Khouri H.M."/>
            <person name="Fedorova N."/>
            <person name="Forberger H.A."/>
            <person name="Tran B."/>
            <person name="Kathariou S."/>
            <person name="Wonderling L.D."/>
            <person name="Uhlich G.A."/>
            <person name="Bayles D.O."/>
            <person name="Luchansky J.B."/>
            <person name="Fraser C.M."/>
        </authorList>
    </citation>
    <scope>NUCLEOTIDE SEQUENCE [LARGE SCALE GENOMIC DNA]</scope>
    <source>
        <strain>F2365</strain>
    </source>
</reference>
<feature type="chain" id="PRO_0000260889" description="Large ribosomal subunit protein uL6">
    <location>
        <begin position="1"/>
        <end position="178"/>
    </location>
</feature>
<feature type="region of interest" description="Disordered" evidence="2">
    <location>
        <begin position="159"/>
        <end position="178"/>
    </location>
</feature>
<dbReference type="EMBL" id="AE017262">
    <property type="protein sequence ID" value="AAT05355.1"/>
    <property type="molecule type" value="Genomic_DNA"/>
</dbReference>
<dbReference type="RefSeq" id="WP_003726442.1">
    <property type="nucleotide sequence ID" value="NC_002973.6"/>
</dbReference>
<dbReference type="SMR" id="Q71WG1"/>
<dbReference type="KEGG" id="lmf:LMOf2365_2590"/>
<dbReference type="HOGENOM" id="CLU_065464_1_2_9"/>
<dbReference type="GO" id="GO:0022625">
    <property type="term" value="C:cytosolic large ribosomal subunit"/>
    <property type="evidence" value="ECO:0007669"/>
    <property type="project" value="TreeGrafter"/>
</dbReference>
<dbReference type="GO" id="GO:0019843">
    <property type="term" value="F:rRNA binding"/>
    <property type="evidence" value="ECO:0007669"/>
    <property type="project" value="UniProtKB-UniRule"/>
</dbReference>
<dbReference type="GO" id="GO:0003735">
    <property type="term" value="F:structural constituent of ribosome"/>
    <property type="evidence" value="ECO:0007669"/>
    <property type="project" value="InterPro"/>
</dbReference>
<dbReference type="GO" id="GO:0002181">
    <property type="term" value="P:cytoplasmic translation"/>
    <property type="evidence" value="ECO:0007669"/>
    <property type="project" value="TreeGrafter"/>
</dbReference>
<dbReference type="FunFam" id="3.90.930.12:FF:000001">
    <property type="entry name" value="50S ribosomal protein L6"/>
    <property type="match status" value="1"/>
</dbReference>
<dbReference type="FunFam" id="3.90.930.12:FF:000002">
    <property type="entry name" value="50S ribosomal protein L6"/>
    <property type="match status" value="1"/>
</dbReference>
<dbReference type="Gene3D" id="3.90.930.12">
    <property type="entry name" value="Ribosomal protein L6, alpha-beta domain"/>
    <property type="match status" value="2"/>
</dbReference>
<dbReference type="HAMAP" id="MF_01365_B">
    <property type="entry name" value="Ribosomal_uL6_B"/>
    <property type="match status" value="1"/>
</dbReference>
<dbReference type="InterPro" id="IPR000702">
    <property type="entry name" value="Ribosomal_uL6-like"/>
</dbReference>
<dbReference type="InterPro" id="IPR036789">
    <property type="entry name" value="Ribosomal_uL6-like_a/b-dom_sf"/>
</dbReference>
<dbReference type="InterPro" id="IPR020040">
    <property type="entry name" value="Ribosomal_uL6_a/b-dom"/>
</dbReference>
<dbReference type="InterPro" id="IPR019906">
    <property type="entry name" value="Ribosomal_uL6_bac-type"/>
</dbReference>
<dbReference type="InterPro" id="IPR002358">
    <property type="entry name" value="Ribosomal_uL6_CS"/>
</dbReference>
<dbReference type="NCBIfam" id="TIGR03654">
    <property type="entry name" value="L6_bact"/>
    <property type="match status" value="1"/>
</dbReference>
<dbReference type="PANTHER" id="PTHR11655">
    <property type="entry name" value="60S/50S RIBOSOMAL PROTEIN L6/L9"/>
    <property type="match status" value="1"/>
</dbReference>
<dbReference type="PANTHER" id="PTHR11655:SF14">
    <property type="entry name" value="LARGE RIBOSOMAL SUBUNIT PROTEIN UL6M"/>
    <property type="match status" value="1"/>
</dbReference>
<dbReference type="Pfam" id="PF00347">
    <property type="entry name" value="Ribosomal_L6"/>
    <property type="match status" value="2"/>
</dbReference>
<dbReference type="PIRSF" id="PIRSF002162">
    <property type="entry name" value="Ribosomal_L6"/>
    <property type="match status" value="1"/>
</dbReference>
<dbReference type="PRINTS" id="PR00059">
    <property type="entry name" value="RIBOSOMALL6"/>
</dbReference>
<dbReference type="SUPFAM" id="SSF56053">
    <property type="entry name" value="Ribosomal protein L6"/>
    <property type="match status" value="2"/>
</dbReference>
<dbReference type="PROSITE" id="PS00525">
    <property type="entry name" value="RIBOSOMAL_L6_1"/>
    <property type="match status" value="1"/>
</dbReference>
<sequence length="178" mass="19386">MSRIGKKTIVIPAGVTVTLNGSTATVKGPKGELVKEFNPEITINIEGNEINVSRPTDNKNHRALHGTTRAILNNMVVGVSEGYEKKLELIGVGYRAQKQGDKLVLNVGYSHPVEFVAPKGVDIEVPANTQVIVKGYNKEHVGELAANIRAVRPPEPYKGKGIRYEGEHVRRKEGKTGK</sequence>
<proteinExistence type="inferred from homology"/>
<organism>
    <name type="scientific">Listeria monocytogenes serotype 4b (strain F2365)</name>
    <dbReference type="NCBI Taxonomy" id="265669"/>
    <lineage>
        <taxon>Bacteria</taxon>
        <taxon>Bacillati</taxon>
        <taxon>Bacillota</taxon>
        <taxon>Bacilli</taxon>
        <taxon>Bacillales</taxon>
        <taxon>Listeriaceae</taxon>
        <taxon>Listeria</taxon>
    </lineage>
</organism>
<comment type="function">
    <text evidence="1">This protein binds to the 23S rRNA, and is important in its secondary structure. It is located near the subunit interface in the base of the L7/L12 stalk, and near the tRNA binding site of the peptidyltransferase center.</text>
</comment>
<comment type="subunit">
    <text evidence="1">Part of the 50S ribosomal subunit.</text>
</comment>
<comment type="similarity">
    <text evidence="1">Belongs to the universal ribosomal protein uL6 family.</text>
</comment>
<gene>
    <name evidence="1" type="primary">rplF</name>
    <name type="ordered locus">LMOf2365_2590</name>
</gene>
<accession>Q71WG1</accession>
<name>RL6_LISMF</name>